<name>DCUP_NOSP7</name>
<evidence type="ECO:0000255" key="1">
    <source>
        <dbReference type="HAMAP-Rule" id="MF_00218"/>
    </source>
</evidence>
<protein>
    <recommendedName>
        <fullName evidence="1">Uroporphyrinogen decarboxylase</fullName>
        <shortName evidence="1">UPD</shortName>
        <shortName evidence="1">URO-D</shortName>
        <ecNumber evidence="1">4.1.1.37</ecNumber>
    </recommendedName>
</protein>
<comment type="function">
    <text evidence="1">Catalyzes the decarboxylation of four acetate groups of uroporphyrinogen-III to yield coproporphyrinogen-III.</text>
</comment>
<comment type="catalytic activity">
    <reaction evidence="1">
        <text>uroporphyrinogen III + 4 H(+) = coproporphyrinogen III + 4 CO2</text>
        <dbReference type="Rhea" id="RHEA:19865"/>
        <dbReference type="ChEBI" id="CHEBI:15378"/>
        <dbReference type="ChEBI" id="CHEBI:16526"/>
        <dbReference type="ChEBI" id="CHEBI:57308"/>
        <dbReference type="ChEBI" id="CHEBI:57309"/>
        <dbReference type="EC" id="4.1.1.37"/>
    </reaction>
</comment>
<comment type="pathway">
    <text evidence="1">Porphyrin-containing compound metabolism; protoporphyrin-IX biosynthesis; coproporphyrinogen-III from 5-aminolevulinate: step 4/4.</text>
</comment>
<comment type="subunit">
    <text evidence="1">Homodimer.</text>
</comment>
<comment type="subcellular location">
    <subcellularLocation>
        <location evidence="1">Cytoplasm</location>
    </subcellularLocation>
</comment>
<comment type="similarity">
    <text evidence="1">Belongs to the uroporphyrinogen decarboxylase family.</text>
</comment>
<feature type="chain" id="PRO_1000100003" description="Uroporphyrinogen decarboxylase">
    <location>
        <begin position="1"/>
        <end position="353"/>
    </location>
</feature>
<feature type="binding site" evidence="1">
    <location>
        <begin position="28"/>
        <end position="32"/>
    </location>
    <ligand>
        <name>substrate</name>
    </ligand>
</feature>
<feature type="binding site" evidence="1">
    <location>
        <position position="78"/>
    </location>
    <ligand>
        <name>substrate</name>
    </ligand>
</feature>
<feature type="binding site" evidence="1">
    <location>
        <position position="155"/>
    </location>
    <ligand>
        <name>substrate</name>
    </ligand>
</feature>
<feature type="binding site" evidence="1">
    <location>
        <position position="210"/>
    </location>
    <ligand>
        <name>substrate</name>
    </ligand>
</feature>
<feature type="binding site" evidence="1">
    <location>
        <position position="325"/>
    </location>
    <ligand>
        <name>substrate</name>
    </ligand>
</feature>
<feature type="site" description="Transition state stabilizer" evidence="1">
    <location>
        <position position="78"/>
    </location>
</feature>
<sequence length="353" mass="39051">MGVSSTTPHLLRAARGEVVDRPPVWMMRQAGRYMKAYRDLREKYPSFRDRSEIPDVAIEVSLQPWKAFQPDGVILFSDIVTPLPGLGIDMDIAEGKGPIIHSPLRTQEQIDRLHPLEPEAALPFIKTILQALRSEVGDKSTVLGFVGAPWTLAAYAVEGKGSKTYSIIKNMAFSDPTILHQLLTKLADAIAIYARYQIDSGAQVVQMFDSWAGQLSPQDYDTFALPYQQRVFQQVKQTHPDTPLILLVSGSAGVLERMAQSGADIVSVDWAVDMADARARLGKQVKVQGNLDPGVLFGSKQFIRDRILDTVRKAGNWGHILNLGHGVLPETPEENVAFFFETAKELNFAGVKN</sequence>
<keyword id="KW-0963">Cytoplasm</keyword>
<keyword id="KW-0210">Decarboxylase</keyword>
<keyword id="KW-0456">Lyase</keyword>
<keyword id="KW-0627">Porphyrin biosynthesis</keyword>
<keyword id="KW-1185">Reference proteome</keyword>
<proteinExistence type="inferred from homology"/>
<reference key="1">
    <citation type="journal article" date="2013" name="Plant Physiol.">
        <title>A Nostoc punctiforme Sugar Transporter Necessary to Establish a Cyanobacterium-Plant Symbiosis.</title>
        <authorList>
            <person name="Ekman M."/>
            <person name="Picossi S."/>
            <person name="Campbell E.L."/>
            <person name="Meeks J.C."/>
            <person name="Flores E."/>
        </authorList>
    </citation>
    <scope>NUCLEOTIDE SEQUENCE [LARGE SCALE GENOMIC DNA]</scope>
    <source>
        <strain>ATCC 29133 / PCC 73102</strain>
    </source>
</reference>
<dbReference type="EC" id="4.1.1.37" evidence="1"/>
<dbReference type="EMBL" id="CP001037">
    <property type="protein sequence ID" value="ACC81096.1"/>
    <property type="molecule type" value="Genomic_DNA"/>
</dbReference>
<dbReference type="RefSeq" id="WP_012409090.1">
    <property type="nucleotide sequence ID" value="NC_010628.1"/>
</dbReference>
<dbReference type="SMR" id="B2J9R9"/>
<dbReference type="STRING" id="63737.Npun_R2542"/>
<dbReference type="EnsemblBacteria" id="ACC81096">
    <property type="protein sequence ID" value="ACC81096"/>
    <property type="gene ID" value="Npun_R2542"/>
</dbReference>
<dbReference type="KEGG" id="npu:Npun_R2542"/>
<dbReference type="eggNOG" id="COG0407">
    <property type="taxonomic scope" value="Bacteria"/>
</dbReference>
<dbReference type="HOGENOM" id="CLU_040933_0_2_3"/>
<dbReference type="OrthoDB" id="9806656at2"/>
<dbReference type="PhylomeDB" id="B2J9R9"/>
<dbReference type="UniPathway" id="UPA00251">
    <property type="reaction ID" value="UER00321"/>
</dbReference>
<dbReference type="Proteomes" id="UP000001191">
    <property type="component" value="Chromosome"/>
</dbReference>
<dbReference type="GO" id="GO:0005737">
    <property type="term" value="C:cytoplasm"/>
    <property type="evidence" value="ECO:0007669"/>
    <property type="project" value="UniProtKB-SubCell"/>
</dbReference>
<dbReference type="GO" id="GO:0004853">
    <property type="term" value="F:uroporphyrinogen decarboxylase activity"/>
    <property type="evidence" value="ECO:0007669"/>
    <property type="project" value="UniProtKB-UniRule"/>
</dbReference>
<dbReference type="GO" id="GO:0006782">
    <property type="term" value="P:protoporphyrinogen IX biosynthetic process"/>
    <property type="evidence" value="ECO:0007669"/>
    <property type="project" value="UniProtKB-UniRule"/>
</dbReference>
<dbReference type="CDD" id="cd00717">
    <property type="entry name" value="URO-D"/>
    <property type="match status" value="1"/>
</dbReference>
<dbReference type="FunFam" id="3.20.20.210:FF:000006">
    <property type="entry name" value="Uroporphyrinogen decarboxylase"/>
    <property type="match status" value="1"/>
</dbReference>
<dbReference type="Gene3D" id="3.20.20.210">
    <property type="match status" value="1"/>
</dbReference>
<dbReference type="HAMAP" id="MF_00218">
    <property type="entry name" value="URO_D"/>
    <property type="match status" value="1"/>
</dbReference>
<dbReference type="InterPro" id="IPR038071">
    <property type="entry name" value="UROD/MetE-like_sf"/>
</dbReference>
<dbReference type="InterPro" id="IPR006361">
    <property type="entry name" value="Uroporphyrinogen_deCO2ase_HemE"/>
</dbReference>
<dbReference type="InterPro" id="IPR000257">
    <property type="entry name" value="Uroporphyrinogen_deCOase"/>
</dbReference>
<dbReference type="NCBIfam" id="TIGR01464">
    <property type="entry name" value="hemE"/>
    <property type="match status" value="1"/>
</dbReference>
<dbReference type="PANTHER" id="PTHR21091">
    <property type="entry name" value="METHYLTETRAHYDROFOLATE:HOMOCYSTEINE METHYLTRANSFERASE RELATED"/>
    <property type="match status" value="1"/>
</dbReference>
<dbReference type="PANTHER" id="PTHR21091:SF169">
    <property type="entry name" value="UROPORPHYRINOGEN DECARBOXYLASE"/>
    <property type="match status" value="1"/>
</dbReference>
<dbReference type="Pfam" id="PF01208">
    <property type="entry name" value="URO-D"/>
    <property type="match status" value="1"/>
</dbReference>
<dbReference type="SUPFAM" id="SSF51726">
    <property type="entry name" value="UROD/MetE-like"/>
    <property type="match status" value="1"/>
</dbReference>
<dbReference type="PROSITE" id="PS00906">
    <property type="entry name" value="UROD_1"/>
    <property type="match status" value="1"/>
</dbReference>
<dbReference type="PROSITE" id="PS00907">
    <property type="entry name" value="UROD_2"/>
    <property type="match status" value="1"/>
</dbReference>
<organism>
    <name type="scientific">Nostoc punctiforme (strain ATCC 29133 / PCC 73102)</name>
    <dbReference type="NCBI Taxonomy" id="63737"/>
    <lineage>
        <taxon>Bacteria</taxon>
        <taxon>Bacillati</taxon>
        <taxon>Cyanobacteriota</taxon>
        <taxon>Cyanophyceae</taxon>
        <taxon>Nostocales</taxon>
        <taxon>Nostocaceae</taxon>
        <taxon>Nostoc</taxon>
    </lineage>
</organism>
<gene>
    <name evidence="1" type="primary">hemE</name>
    <name type="ordered locus">Npun_R2542</name>
</gene>
<accession>B2J9R9</accession>